<name>DXS_GLOC7</name>
<organism>
    <name type="scientific">Gloeothece citriformis (strain PCC 7424)</name>
    <name type="common">Cyanothece sp. (strain PCC 7424)</name>
    <dbReference type="NCBI Taxonomy" id="65393"/>
    <lineage>
        <taxon>Bacteria</taxon>
        <taxon>Bacillati</taxon>
        <taxon>Cyanobacteriota</taxon>
        <taxon>Cyanophyceae</taxon>
        <taxon>Oscillatoriophycideae</taxon>
        <taxon>Chroococcales</taxon>
        <taxon>Aphanothecaceae</taxon>
        <taxon>Gloeothece</taxon>
        <taxon>Gloeothece citriformis</taxon>
    </lineage>
</organism>
<evidence type="ECO:0000255" key="1">
    <source>
        <dbReference type="HAMAP-Rule" id="MF_00315"/>
    </source>
</evidence>
<comment type="function">
    <text evidence="1">Catalyzes the acyloin condensation reaction between C atoms 2 and 3 of pyruvate and glyceraldehyde 3-phosphate to yield 1-deoxy-D-xylulose-5-phosphate (DXP).</text>
</comment>
<comment type="catalytic activity">
    <reaction evidence="1">
        <text>D-glyceraldehyde 3-phosphate + pyruvate + H(+) = 1-deoxy-D-xylulose 5-phosphate + CO2</text>
        <dbReference type="Rhea" id="RHEA:12605"/>
        <dbReference type="ChEBI" id="CHEBI:15361"/>
        <dbReference type="ChEBI" id="CHEBI:15378"/>
        <dbReference type="ChEBI" id="CHEBI:16526"/>
        <dbReference type="ChEBI" id="CHEBI:57792"/>
        <dbReference type="ChEBI" id="CHEBI:59776"/>
        <dbReference type="EC" id="2.2.1.7"/>
    </reaction>
</comment>
<comment type="cofactor">
    <cofactor evidence="1">
        <name>Mg(2+)</name>
        <dbReference type="ChEBI" id="CHEBI:18420"/>
    </cofactor>
    <text evidence="1">Binds 1 Mg(2+) ion per subunit.</text>
</comment>
<comment type="cofactor">
    <cofactor evidence="1">
        <name>thiamine diphosphate</name>
        <dbReference type="ChEBI" id="CHEBI:58937"/>
    </cofactor>
    <text evidence="1">Binds 1 thiamine pyrophosphate per subunit.</text>
</comment>
<comment type="pathway">
    <text evidence="1">Metabolic intermediate biosynthesis; 1-deoxy-D-xylulose 5-phosphate biosynthesis; 1-deoxy-D-xylulose 5-phosphate from D-glyceraldehyde 3-phosphate and pyruvate: step 1/1.</text>
</comment>
<comment type="subunit">
    <text evidence="1">Homodimer.</text>
</comment>
<comment type="similarity">
    <text evidence="1">Belongs to the transketolase family. DXPS subfamily.</text>
</comment>
<proteinExistence type="inferred from homology"/>
<keyword id="KW-0414">Isoprene biosynthesis</keyword>
<keyword id="KW-0460">Magnesium</keyword>
<keyword id="KW-0479">Metal-binding</keyword>
<keyword id="KW-1185">Reference proteome</keyword>
<keyword id="KW-0784">Thiamine biosynthesis</keyword>
<keyword id="KW-0786">Thiamine pyrophosphate</keyword>
<keyword id="KW-0808">Transferase</keyword>
<protein>
    <recommendedName>
        <fullName evidence="1">1-deoxy-D-xylulose-5-phosphate synthase</fullName>
        <ecNumber evidence="1">2.2.1.7</ecNumber>
    </recommendedName>
    <alternativeName>
        <fullName evidence="1">1-deoxyxylulose-5-phosphate synthase</fullName>
        <shortName evidence="1">DXP synthase</shortName>
        <shortName evidence="1">DXPS</shortName>
    </alternativeName>
</protein>
<feature type="chain" id="PRO_1000119541" description="1-deoxy-D-xylulose-5-phosphate synthase">
    <location>
        <begin position="1"/>
        <end position="635"/>
    </location>
</feature>
<feature type="binding site" evidence="1">
    <location>
        <position position="72"/>
    </location>
    <ligand>
        <name>thiamine diphosphate</name>
        <dbReference type="ChEBI" id="CHEBI:58937"/>
    </ligand>
</feature>
<feature type="binding site" evidence="1">
    <location>
        <begin position="113"/>
        <end position="115"/>
    </location>
    <ligand>
        <name>thiamine diphosphate</name>
        <dbReference type="ChEBI" id="CHEBI:58937"/>
    </ligand>
</feature>
<feature type="binding site" evidence="1">
    <location>
        <position position="144"/>
    </location>
    <ligand>
        <name>Mg(2+)</name>
        <dbReference type="ChEBI" id="CHEBI:18420"/>
    </ligand>
</feature>
<feature type="binding site" evidence="1">
    <location>
        <begin position="145"/>
        <end position="146"/>
    </location>
    <ligand>
        <name>thiamine diphosphate</name>
        <dbReference type="ChEBI" id="CHEBI:58937"/>
    </ligand>
</feature>
<feature type="binding site" evidence="1">
    <location>
        <position position="174"/>
    </location>
    <ligand>
        <name>Mg(2+)</name>
        <dbReference type="ChEBI" id="CHEBI:18420"/>
    </ligand>
</feature>
<feature type="binding site" evidence="1">
    <location>
        <position position="174"/>
    </location>
    <ligand>
        <name>thiamine diphosphate</name>
        <dbReference type="ChEBI" id="CHEBI:58937"/>
    </ligand>
</feature>
<feature type="binding site" evidence="1">
    <location>
        <position position="286"/>
    </location>
    <ligand>
        <name>thiamine diphosphate</name>
        <dbReference type="ChEBI" id="CHEBI:58937"/>
    </ligand>
</feature>
<feature type="binding site" evidence="1">
    <location>
        <position position="369"/>
    </location>
    <ligand>
        <name>thiamine diphosphate</name>
        <dbReference type="ChEBI" id="CHEBI:58937"/>
    </ligand>
</feature>
<accession>B7KAF7</accession>
<sequence>MHLSEITHPNQLHGLSIRQLEDIARQIREKHLQTVATSGGHLGPGLGVVELTIALYQTLDLDRDKVIWDVGHQAYPHKMLTGRYNNFNTLRQKNGIAGYLKRCESKFDHFGAGHASTSISAALGMALARDAQGEDYKVAAIIGDGALTGGMALEAINHAGHLPNTNLMVILNDNEMSISPNVGAISRYLNKVRLSEPVQFLSDNLEEQFKHLPFFGDVTPEMDRLKEGMKRLAVPKVGAVIEELGFKYFGPIDGHNLRELINTFKQAHKVHGPVFVHVATVKGKGYELAEQDQVGYHAQSPFNLVTGKPIPSSKPKPPGYSKVFAHTLTKLAENNPKIIGITAAMATGTGLDKLQQKLPKQYIDVGIAEQHAVTLAAGLACEGMRPVVAIYSTFLQRAYDQVIHDVCIQNLPVFFCMDRAGIVGADGPTHQGMYDIAYLRCIPNLVIMAPKDEAELQRMIVTGVNYTDGPIAMRYPRGNGLGVPLMEEGWEALPIGKGEILRNGDDLLLLGYGTMVNTAMQVAEILGEHGIEATVVNARFVKPLDTDLIVPLAKQTGKVVTLEEGCLMGGFGSAVAEALLDHNVLVPVKRFGVPDQLVDHAKPDESFADLGLTSSQIADEVLKSFFKTQEPSVIS</sequence>
<reference key="1">
    <citation type="journal article" date="2011" name="MBio">
        <title>Novel metabolic attributes of the genus Cyanothece, comprising a group of unicellular nitrogen-fixing Cyanobacteria.</title>
        <authorList>
            <person name="Bandyopadhyay A."/>
            <person name="Elvitigala T."/>
            <person name="Welsh E."/>
            <person name="Stockel J."/>
            <person name="Liberton M."/>
            <person name="Min H."/>
            <person name="Sherman L.A."/>
            <person name="Pakrasi H.B."/>
        </authorList>
    </citation>
    <scope>NUCLEOTIDE SEQUENCE [LARGE SCALE GENOMIC DNA]</scope>
    <source>
        <strain>PCC 7424</strain>
    </source>
</reference>
<gene>
    <name evidence="1" type="primary">dxs</name>
    <name type="ordered locus">PCC7424_4569</name>
</gene>
<dbReference type="EC" id="2.2.1.7" evidence="1"/>
<dbReference type="EMBL" id="CP001291">
    <property type="protein sequence ID" value="ACK72931.1"/>
    <property type="molecule type" value="Genomic_DNA"/>
</dbReference>
<dbReference type="RefSeq" id="WP_015956514.1">
    <property type="nucleotide sequence ID" value="NC_011729.1"/>
</dbReference>
<dbReference type="SMR" id="B7KAF7"/>
<dbReference type="STRING" id="65393.PCC7424_4569"/>
<dbReference type="KEGG" id="cyc:PCC7424_4569"/>
<dbReference type="eggNOG" id="COG1154">
    <property type="taxonomic scope" value="Bacteria"/>
</dbReference>
<dbReference type="HOGENOM" id="CLU_009227_1_4_3"/>
<dbReference type="OrthoDB" id="9803371at2"/>
<dbReference type="UniPathway" id="UPA00064">
    <property type="reaction ID" value="UER00091"/>
</dbReference>
<dbReference type="Proteomes" id="UP000002384">
    <property type="component" value="Chromosome"/>
</dbReference>
<dbReference type="GO" id="GO:0005829">
    <property type="term" value="C:cytosol"/>
    <property type="evidence" value="ECO:0007669"/>
    <property type="project" value="TreeGrafter"/>
</dbReference>
<dbReference type="GO" id="GO:0008661">
    <property type="term" value="F:1-deoxy-D-xylulose-5-phosphate synthase activity"/>
    <property type="evidence" value="ECO:0007669"/>
    <property type="project" value="UniProtKB-UniRule"/>
</dbReference>
<dbReference type="GO" id="GO:0000287">
    <property type="term" value="F:magnesium ion binding"/>
    <property type="evidence" value="ECO:0007669"/>
    <property type="project" value="UniProtKB-UniRule"/>
</dbReference>
<dbReference type="GO" id="GO:0030976">
    <property type="term" value="F:thiamine pyrophosphate binding"/>
    <property type="evidence" value="ECO:0007669"/>
    <property type="project" value="UniProtKB-UniRule"/>
</dbReference>
<dbReference type="GO" id="GO:0052865">
    <property type="term" value="P:1-deoxy-D-xylulose 5-phosphate biosynthetic process"/>
    <property type="evidence" value="ECO:0007669"/>
    <property type="project" value="UniProtKB-UniPathway"/>
</dbReference>
<dbReference type="GO" id="GO:0019288">
    <property type="term" value="P:isopentenyl diphosphate biosynthetic process, methylerythritol 4-phosphate pathway"/>
    <property type="evidence" value="ECO:0007669"/>
    <property type="project" value="TreeGrafter"/>
</dbReference>
<dbReference type="GO" id="GO:0016114">
    <property type="term" value="P:terpenoid biosynthetic process"/>
    <property type="evidence" value="ECO:0007669"/>
    <property type="project" value="UniProtKB-UniRule"/>
</dbReference>
<dbReference type="GO" id="GO:0009228">
    <property type="term" value="P:thiamine biosynthetic process"/>
    <property type="evidence" value="ECO:0007669"/>
    <property type="project" value="UniProtKB-UniRule"/>
</dbReference>
<dbReference type="CDD" id="cd02007">
    <property type="entry name" value="TPP_DXS"/>
    <property type="match status" value="1"/>
</dbReference>
<dbReference type="CDD" id="cd07033">
    <property type="entry name" value="TPP_PYR_DXS_TK_like"/>
    <property type="match status" value="1"/>
</dbReference>
<dbReference type="FunFam" id="3.40.50.920:FF:000002">
    <property type="entry name" value="1-deoxy-D-xylulose-5-phosphate synthase"/>
    <property type="match status" value="1"/>
</dbReference>
<dbReference type="FunFam" id="3.40.50.970:FF:000005">
    <property type="entry name" value="1-deoxy-D-xylulose-5-phosphate synthase"/>
    <property type="match status" value="1"/>
</dbReference>
<dbReference type="Gene3D" id="3.40.50.920">
    <property type="match status" value="1"/>
</dbReference>
<dbReference type="Gene3D" id="3.40.50.970">
    <property type="match status" value="2"/>
</dbReference>
<dbReference type="HAMAP" id="MF_00315">
    <property type="entry name" value="DXP_synth"/>
    <property type="match status" value="1"/>
</dbReference>
<dbReference type="InterPro" id="IPR005477">
    <property type="entry name" value="Dxylulose-5-P_synthase"/>
</dbReference>
<dbReference type="InterPro" id="IPR029061">
    <property type="entry name" value="THDP-binding"/>
</dbReference>
<dbReference type="InterPro" id="IPR009014">
    <property type="entry name" value="Transketo_C/PFOR_II"/>
</dbReference>
<dbReference type="InterPro" id="IPR005475">
    <property type="entry name" value="Transketolase-like_Pyr-bd"/>
</dbReference>
<dbReference type="InterPro" id="IPR020826">
    <property type="entry name" value="Transketolase_BS"/>
</dbReference>
<dbReference type="InterPro" id="IPR033248">
    <property type="entry name" value="Transketolase_C"/>
</dbReference>
<dbReference type="InterPro" id="IPR049557">
    <property type="entry name" value="Transketolase_CS"/>
</dbReference>
<dbReference type="NCBIfam" id="TIGR00204">
    <property type="entry name" value="dxs"/>
    <property type="match status" value="1"/>
</dbReference>
<dbReference type="NCBIfam" id="NF003933">
    <property type="entry name" value="PRK05444.2-2"/>
    <property type="match status" value="1"/>
</dbReference>
<dbReference type="PANTHER" id="PTHR43322">
    <property type="entry name" value="1-D-DEOXYXYLULOSE 5-PHOSPHATE SYNTHASE-RELATED"/>
    <property type="match status" value="1"/>
</dbReference>
<dbReference type="PANTHER" id="PTHR43322:SF5">
    <property type="entry name" value="1-DEOXY-D-XYLULOSE-5-PHOSPHATE SYNTHASE, CHLOROPLASTIC"/>
    <property type="match status" value="1"/>
</dbReference>
<dbReference type="Pfam" id="PF13292">
    <property type="entry name" value="DXP_synthase_N"/>
    <property type="match status" value="1"/>
</dbReference>
<dbReference type="Pfam" id="PF02779">
    <property type="entry name" value="Transket_pyr"/>
    <property type="match status" value="1"/>
</dbReference>
<dbReference type="Pfam" id="PF02780">
    <property type="entry name" value="Transketolase_C"/>
    <property type="match status" value="1"/>
</dbReference>
<dbReference type="SMART" id="SM00861">
    <property type="entry name" value="Transket_pyr"/>
    <property type="match status" value="1"/>
</dbReference>
<dbReference type="SUPFAM" id="SSF52518">
    <property type="entry name" value="Thiamin diphosphate-binding fold (THDP-binding)"/>
    <property type="match status" value="2"/>
</dbReference>
<dbReference type="SUPFAM" id="SSF52922">
    <property type="entry name" value="TK C-terminal domain-like"/>
    <property type="match status" value="1"/>
</dbReference>
<dbReference type="PROSITE" id="PS00801">
    <property type="entry name" value="TRANSKETOLASE_1"/>
    <property type="match status" value="1"/>
</dbReference>
<dbReference type="PROSITE" id="PS00802">
    <property type="entry name" value="TRANSKETOLASE_2"/>
    <property type="match status" value="1"/>
</dbReference>